<sequence>MLKIRLTRIGAPKKPCYRIIVTEARSPRDATYTDLVGTYNPMTNPETVVINAEKALYWIGKGAQPTDTVARLLKKAGVVNSN</sequence>
<name>RS16_DEHM1</name>
<comment type="similarity">
    <text evidence="1">Belongs to the bacterial ribosomal protein bS16 family.</text>
</comment>
<dbReference type="EMBL" id="CP000027">
    <property type="protein sequence ID" value="AAW40160.1"/>
    <property type="molecule type" value="Genomic_DNA"/>
</dbReference>
<dbReference type="RefSeq" id="WP_010936344.1">
    <property type="nucleotide sequence ID" value="NC_002936.3"/>
</dbReference>
<dbReference type="SMR" id="Q3Z8Y8"/>
<dbReference type="FunCoup" id="Q3Z8Y8">
    <property type="interactions" value="329"/>
</dbReference>
<dbReference type="STRING" id="243164.DET0568"/>
<dbReference type="GeneID" id="3230124"/>
<dbReference type="KEGG" id="det:DET0568"/>
<dbReference type="eggNOG" id="COG0228">
    <property type="taxonomic scope" value="Bacteria"/>
</dbReference>
<dbReference type="HOGENOM" id="CLU_100590_5_0_0"/>
<dbReference type="InParanoid" id="Q3Z8Y8"/>
<dbReference type="Proteomes" id="UP000008289">
    <property type="component" value="Chromosome"/>
</dbReference>
<dbReference type="GO" id="GO:0005737">
    <property type="term" value="C:cytoplasm"/>
    <property type="evidence" value="ECO:0007669"/>
    <property type="project" value="UniProtKB-ARBA"/>
</dbReference>
<dbReference type="GO" id="GO:0015935">
    <property type="term" value="C:small ribosomal subunit"/>
    <property type="evidence" value="ECO:0007669"/>
    <property type="project" value="TreeGrafter"/>
</dbReference>
<dbReference type="GO" id="GO:0003735">
    <property type="term" value="F:structural constituent of ribosome"/>
    <property type="evidence" value="ECO:0007669"/>
    <property type="project" value="InterPro"/>
</dbReference>
<dbReference type="GO" id="GO:0006412">
    <property type="term" value="P:translation"/>
    <property type="evidence" value="ECO:0007669"/>
    <property type="project" value="UniProtKB-UniRule"/>
</dbReference>
<dbReference type="Gene3D" id="3.30.1320.10">
    <property type="match status" value="1"/>
</dbReference>
<dbReference type="HAMAP" id="MF_00385">
    <property type="entry name" value="Ribosomal_bS16"/>
    <property type="match status" value="1"/>
</dbReference>
<dbReference type="InterPro" id="IPR000307">
    <property type="entry name" value="Ribosomal_bS16"/>
</dbReference>
<dbReference type="InterPro" id="IPR020592">
    <property type="entry name" value="Ribosomal_bS16_CS"/>
</dbReference>
<dbReference type="InterPro" id="IPR023803">
    <property type="entry name" value="Ribosomal_bS16_dom_sf"/>
</dbReference>
<dbReference type="NCBIfam" id="TIGR00002">
    <property type="entry name" value="S16"/>
    <property type="match status" value="1"/>
</dbReference>
<dbReference type="PANTHER" id="PTHR12919">
    <property type="entry name" value="30S RIBOSOMAL PROTEIN S16"/>
    <property type="match status" value="1"/>
</dbReference>
<dbReference type="PANTHER" id="PTHR12919:SF20">
    <property type="entry name" value="SMALL RIBOSOMAL SUBUNIT PROTEIN BS16M"/>
    <property type="match status" value="1"/>
</dbReference>
<dbReference type="Pfam" id="PF00886">
    <property type="entry name" value="Ribosomal_S16"/>
    <property type="match status" value="1"/>
</dbReference>
<dbReference type="SUPFAM" id="SSF54565">
    <property type="entry name" value="Ribosomal protein S16"/>
    <property type="match status" value="1"/>
</dbReference>
<dbReference type="PROSITE" id="PS00732">
    <property type="entry name" value="RIBOSOMAL_S16"/>
    <property type="match status" value="1"/>
</dbReference>
<protein>
    <recommendedName>
        <fullName evidence="1">Small ribosomal subunit protein bS16</fullName>
    </recommendedName>
    <alternativeName>
        <fullName evidence="2">30S ribosomal protein S16</fullName>
    </alternativeName>
</protein>
<evidence type="ECO:0000255" key="1">
    <source>
        <dbReference type="HAMAP-Rule" id="MF_00385"/>
    </source>
</evidence>
<evidence type="ECO:0000305" key="2"/>
<gene>
    <name evidence="1" type="primary">rpsP</name>
    <name type="ordered locus">DET0568</name>
</gene>
<feature type="chain" id="PRO_0000243799" description="Small ribosomal subunit protein bS16">
    <location>
        <begin position="1"/>
        <end position="82"/>
    </location>
</feature>
<reference key="1">
    <citation type="journal article" date="2005" name="Science">
        <title>Genome sequence of the PCE-dechlorinating bacterium Dehalococcoides ethenogenes.</title>
        <authorList>
            <person name="Seshadri R."/>
            <person name="Adrian L."/>
            <person name="Fouts D.E."/>
            <person name="Eisen J.A."/>
            <person name="Phillippy A.M."/>
            <person name="Methe B.A."/>
            <person name="Ward N.L."/>
            <person name="Nelson W.C."/>
            <person name="DeBoy R.T."/>
            <person name="Khouri H.M."/>
            <person name="Kolonay J.F."/>
            <person name="Dodson R.J."/>
            <person name="Daugherty S.C."/>
            <person name="Brinkac L.M."/>
            <person name="Sullivan S.A."/>
            <person name="Madupu R."/>
            <person name="Nelson K.E."/>
            <person name="Kang K.H."/>
            <person name="Impraim M."/>
            <person name="Tran K."/>
            <person name="Robinson J.M."/>
            <person name="Forberger H.A."/>
            <person name="Fraser C.M."/>
            <person name="Zinder S.H."/>
            <person name="Heidelberg J.F."/>
        </authorList>
    </citation>
    <scope>NUCLEOTIDE SEQUENCE [LARGE SCALE GENOMIC DNA]</scope>
    <source>
        <strain>ATCC BAA-2266 / KCTC 15142 / 195</strain>
    </source>
</reference>
<accession>Q3Z8Y8</accession>
<keyword id="KW-0687">Ribonucleoprotein</keyword>
<keyword id="KW-0689">Ribosomal protein</keyword>
<organism>
    <name type="scientific">Dehalococcoides mccartyi (strain ATCC BAA-2266 / KCTC 15142 / 195)</name>
    <name type="common">Dehalococcoides ethenogenes (strain 195)</name>
    <dbReference type="NCBI Taxonomy" id="243164"/>
    <lineage>
        <taxon>Bacteria</taxon>
        <taxon>Bacillati</taxon>
        <taxon>Chloroflexota</taxon>
        <taxon>Dehalococcoidia</taxon>
        <taxon>Dehalococcoidales</taxon>
        <taxon>Dehalococcoidaceae</taxon>
        <taxon>Dehalococcoides</taxon>
    </lineage>
</organism>
<proteinExistence type="inferred from homology"/>